<proteinExistence type="inferred from homology"/>
<sequence length="314" mass="33600">MTEPLRIVFAGTPEFAAEHLKALLDSPYQIVAVYTQPDRPAGRGQKLMPSPVKQLALQHEIPVMQPPTLRAPEAQAELAALKPDLMVVVAYGLILPQVVLDIPRLGCINSHASLLPRWRGAAPIQRAVQAGDAESGVTVMQMEAGLDTGPMLLKAVTPITAQDTGGTLHDRLAELGPPAVLQAIAGLADGSLVGEVQDDSLANYAHKLNKDEARLDWTRPADELERLIRAFNPWPICHSTLNEETLKVLAADLAEGQGVPGTVLSASKDGLIVACGQNALRLTRLQLPGGKPLNFADLFNSRREKFAIGTVLGQ</sequence>
<feature type="chain" id="PRO_1000020128" description="Methionyl-tRNA formyltransferase">
    <location>
        <begin position="1"/>
        <end position="314"/>
    </location>
</feature>
<feature type="binding site" evidence="1">
    <location>
        <begin position="113"/>
        <end position="116"/>
    </location>
    <ligand>
        <name>(6S)-5,6,7,8-tetrahydrofolate</name>
        <dbReference type="ChEBI" id="CHEBI:57453"/>
    </ligand>
</feature>
<gene>
    <name evidence="1" type="primary">fmt</name>
    <name type="ordered locus">PSPPH_0020</name>
</gene>
<dbReference type="EC" id="2.1.2.9" evidence="1"/>
<dbReference type="EMBL" id="CP000058">
    <property type="protein sequence ID" value="AAZ37003.1"/>
    <property type="molecule type" value="Genomic_DNA"/>
</dbReference>
<dbReference type="RefSeq" id="WP_004660331.1">
    <property type="nucleotide sequence ID" value="NC_005773.3"/>
</dbReference>
<dbReference type="SMR" id="Q48QI2"/>
<dbReference type="KEGG" id="psp:PSPPH_0020"/>
<dbReference type="eggNOG" id="COG0223">
    <property type="taxonomic scope" value="Bacteria"/>
</dbReference>
<dbReference type="HOGENOM" id="CLU_033347_1_2_6"/>
<dbReference type="Proteomes" id="UP000000551">
    <property type="component" value="Chromosome"/>
</dbReference>
<dbReference type="GO" id="GO:0005829">
    <property type="term" value="C:cytosol"/>
    <property type="evidence" value="ECO:0007669"/>
    <property type="project" value="TreeGrafter"/>
</dbReference>
<dbReference type="GO" id="GO:0004479">
    <property type="term" value="F:methionyl-tRNA formyltransferase activity"/>
    <property type="evidence" value="ECO:0007669"/>
    <property type="project" value="UniProtKB-UniRule"/>
</dbReference>
<dbReference type="CDD" id="cd08646">
    <property type="entry name" value="FMT_core_Met-tRNA-FMT_N"/>
    <property type="match status" value="1"/>
</dbReference>
<dbReference type="CDD" id="cd08704">
    <property type="entry name" value="Met_tRNA_FMT_C"/>
    <property type="match status" value="1"/>
</dbReference>
<dbReference type="FunFam" id="3.40.50.12230:FF:000001">
    <property type="entry name" value="Methionyl-tRNA formyltransferase"/>
    <property type="match status" value="1"/>
</dbReference>
<dbReference type="FunFam" id="3.40.50.170:FF:000003">
    <property type="entry name" value="Methionyl-tRNA formyltransferase"/>
    <property type="match status" value="1"/>
</dbReference>
<dbReference type="Gene3D" id="3.10.25.10">
    <property type="entry name" value="Formyl transferase, C-terminal domain"/>
    <property type="match status" value="1"/>
</dbReference>
<dbReference type="Gene3D" id="3.40.50.170">
    <property type="entry name" value="Formyl transferase, N-terminal domain"/>
    <property type="match status" value="1"/>
</dbReference>
<dbReference type="HAMAP" id="MF_00182">
    <property type="entry name" value="Formyl_trans"/>
    <property type="match status" value="1"/>
</dbReference>
<dbReference type="InterPro" id="IPR005794">
    <property type="entry name" value="Fmt"/>
</dbReference>
<dbReference type="InterPro" id="IPR005793">
    <property type="entry name" value="Formyl_trans_C"/>
</dbReference>
<dbReference type="InterPro" id="IPR037022">
    <property type="entry name" value="Formyl_trans_C_sf"/>
</dbReference>
<dbReference type="InterPro" id="IPR002376">
    <property type="entry name" value="Formyl_transf_N"/>
</dbReference>
<dbReference type="InterPro" id="IPR036477">
    <property type="entry name" value="Formyl_transf_N_sf"/>
</dbReference>
<dbReference type="InterPro" id="IPR011034">
    <property type="entry name" value="Formyl_transferase-like_C_sf"/>
</dbReference>
<dbReference type="InterPro" id="IPR001555">
    <property type="entry name" value="GART_AS"/>
</dbReference>
<dbReference type="InterPro" id="IPR044135">
    <property type="entry name" value="Met-tRNA-FMT_C"/>
</dbReference>
<dbReference type="InterPro" id="IPR041711">
    <property type="entry name" value="Met-tRNA-FMT_N"/>
</dbReference>
<dbReference type="NCBIfam" id="TIGR00460">
    <property type="entry name" value="fmt"/>
    <property type="match status" value="1"/>
</dbReference>
<dbReference type="PANTHER" id="PTHR11138">
    <property type="entry name" value="METHIONYL-TRNA FORMYLTRANSFERASE"/>
    <property type="match status" value="1"/>
</dbReference>
<dbReference type="PANTHER" id="PTHR11138:SF5">
    <property type="entry name" value="METHIONYL-TRNA FORMYLTRANSFERASE, MITOCHONDRIAL"/>
    <property type="match status" value="1"/>
</dbReference>
<dbReference type="Pfam" id="PF02911">
    <property type="entry name" value="Formyl_trans_C"/>
    <property type="match status" value="1"/>
</dbReference>
<dbReference type="Pfam" id="PF00551">
    <property type="entry name" value="Formyl_trans_N"/>
    <property type="match status" value="1"/>
</dbReference>
<dbReference type="SUPFAM" id="SSF50486">
    <property type="entry name" value="FMT C-terminal domain-like"/>
    <property type="match status" value="1"/>
</dbReference>
<dbReference type="SUPFAM" id="SSF53328">
    <property type="entry name" value="Formyltransferase"/>
    <property type="match status" value="1"/>
</dbReference>
<dbReference type="PROSITE" id="PS00373">
    <property type="entry name" value="GART"/>
    <property type="match status" value="1"/>
</dbReference>
<organism>
    <name type="scientific">Pseudomonas savastanoi pv. phaseolicola (strain 1448A / Race 6)</name>
    <name type="common">Pseudomonas syringae pv. phaseolicola (strain 1448A / Race 6)</name>
    <dbReference type="NCBI Taxonomy" id="264730"/>
    <lineage>
        <taxon>Bacteria</taxon>
        <taxon>Pseudomonadati</taxon>
        <taxon>Pseudomonadota</taxon>
        <taxon>Gammaproteobacteria</taxon>
        <taxon>Pseudomonadales</taxon>
        <taxon>Pseudomonadaceae</taxon>
        <taxon>Pseudomonas</taxon>
    </lineage>
</organism>
<protein>
    <recommendedName>
        <fullName evidence="1">Methionyl-tRNA formyltransferase</fullName>
        <ecNumber evidence="1">2.1.2.9</ecNumber>
    </recommendedName>
</protein>
<reference key="1">
    <citation type="journal article" date="2005" name="J. Bacteriol.">
        <title>Whole-genome sequence analysis of Pseudomonas syringae pv. phaseolicola 1448A reveals divergence among pathovars in genes involved in virulence and transposition.</title>
        <authorList>
            <person name="Joardar V."/>
            <person name="Lindeberg M."/>
            <person name="Jackson R.W."/>
            <person name="Selengut J."/>
            <person name="Dodson R."/>
            <person name="Brinkac L.M."/>
            <person name="Daugherty S.C."/>
            <person name="DeBoy R.T."/>
            <person name="Durkin A.S."/>
            <person name="Gwinn Giglio M."/>
            <person name="Madupu R."/>
            <person name="Nelson W.C."/>
            <person name="Rosovitz M.J."/>
            <person name="Sullivan S.A."/>
            <person name="Crabtree J."/>
            <person name="Creasy T."/>
            <person name="Davidsen T.M."/>
            <person name="Haft D.H."/>
            <person name="Zafar N."/>
            <person name="Zhou L."/>
            <person name="Halpin R."/>
            <person name="Holley T."/>
            <person name="Khouri H.M."/>
            <person name="Feldblyum T.V."/>
            <person name="White O."/>
            <person name="Fraser C.M."/>
            <person name="Chatterjee A.K."/>
            <person name="Cartinhour S."/>
            <person name="Schneider D."/>
            <person name="Mansfield J.W."/>
            <person name="Collmer A."/>
            <person name="Buell R."/>
        </authorList>
    </citation>
    <scope>NUCLEOTIDE SEQUENCE [LARGE SCALE GENOMIC DNA]</scope>
    <source>
        <strain>1448A / Race 6</strain>
    </source>
</reference>
<accession>Q48QI2</accession>
<comment type="function">
    <text evidence="1">Attaches a formyl group to the free amino group of methionyl-tRNA(fMet). The formyl group appears to play a dual role in the initiator identity of N-formylmethionyl-tRNA by promoting its recognition by IF2 and preventing the misappropriation of this tRNA by the elongation apparatus.</text>
</comment>
<comment type="catalytic activity">
    <reaction evidence="1">
        <text>L-methionyl-tRNA(fMet) + (6R)-10-formyltetrahydrofolate = N-formyl-L-methionyl-tRNA(fMet) + (6S)-5,6,7,8-tetrahydrofolate + H(+)</text>
        <dbReference type="Rhea" id="RHEA:24380"/>
        <dbReference type="Rhea" id="RHEA-COMP:9952"/>
        <dbReference type="Rhea" id="RHEA-COMP:9953"/>
        <dbReference type="ChEBI" id="CHEBI:15378"/>
        <dbReference type="ChEBI" id="CHEBI:57453"/>
        <dbReference type="ChEBI" id="CHEBI:78530"/>
        <dbReference type="ChEBI" id="CHEBI:78844"/>
        <dbReference type="ChEBI" id="CHEBI:195366"/>
        <dbReference type="EC" id="2.1.2.9"/>
    </reaction>
</comment>
<comment type="similarity">
    <text evidence="1">Belongs to the Fmt family.</text>
</comment>
<name>FMT_PSE14</name>
<evidence type="ECO:0000255" key="1">
    <source>
        <dbReference type="HAMAP-Rule" id="MF_00182"/>
    </source>
</evidence>
<keyword id="KW-0648">Protein biosynthesis</keyword>
<keyword id="KW-0808">Transferase</keyword>